<sequence>MEQTFIMIKPDGVQRGLVGEIISRFEKKGFSLKALKFINVDRPFAEKHYADLSAKPFFNGLVEYIVSGPVVAMVWEGKGVVLTGRKIIGATNPLASEPGTIRGDFAIDIGRNVIHGSDAVESATKEIALWFPEGVVNWQSSLHSWIYE</sequence>
<gene>
    <name type="primary">NDKP1</name>
</gene>
<comment type="function">
    <text>Major role in the synthesis of nucleoside triphosphates other than ATP. The ATP gamma phosphate is transferred to the NDP beta phosphate via a ping-pong mechanism, using a phosphorylated active-site intermediate.</text>
</comment>
<comment type="catalytic activity">
    <reaction>
        <text>a 2'-deoxyribonucleoside 5'-diphosphate + ATP = a 2'-deoxyribonucleoside 5'-triphosphate + ADP</text>
        <dbReference type="Rhea" id="RHEA:44640"/>
        <dbReference type="ChEBI" id="CHEBI:30616"/>
        <dbReference type="ChEBI" id="CHEBI:61560"/>
        <dbReference type="ChEBI" id="CHEBI:73316"/>
        <dbReference type="ChEBI" id="CHEBI:456216"/>
        <dbReference type="EC" id="2.7.4.6"/>
    </reaction>
</comment>
<comment type="catalytic activity">
    <reaction>
        <text>a ribonucleoside 5'-diphosphate + ATP = a ribonucleoside 5'-triphosphate + ADP</text>
        <dbReference type="Rhea" id="RHEA:18113"/>
        <dbReference type="ChEBI" id="CHEBI:30616"/>
        <dbReference type="ChEBI" id="CHEBI:57930"/>
        <dbReference type="ChEBI" id="CHEBI:61557"/>
        <dbReference type="ChEBI" id="CHEBI:456216"/>
        <dbReference type="EC" id="2.7.4.6"/>
    </reaction>
</comment>
<comment type="cofactor">
    <cofactor evidence="1">
        <name>Mg(2+)</name>
        <dbReference type="ChEBI" id="CHEBI:18420"/>
    </cofactor>
</comment>
<comment type="similarity">
    <text evidence="2">Belongs to the NDK family.</text>
</comment>
<keyword id="KW-0067">ATP-binding</keyword>
<keyword id="KW-0418">Kinase</keyword>
<keyword id="KW-0460">Magnesium</keyword>
<keyword id="KW-0479">Metal-binding</keyword>
<keyword id="KW-0546">Nucleotide metabolism</keyword>
<keyword id="KW-0547">Nucleotide-binding</keyword>
<keyword id="KW-0597">Phosphoprotein</keyword>
<keyword id="KW-0808">Transferase</keyword>
<organism>
    <name type="scientific">Mesembryanthemum crystallinum</name>
    <name type="common">Common ice plant</name>
    <name type="synonym">Cryophytum crystallinum</name>
    <dbReference type="NCBI Taxonomy" id="3544"/>
    <lineage>
        <taxon>Eukaryota</taxon>
        <taxon>Viridiplantae</taxon>
        <taxon>Streptophyta</taxon>
        <taxon>Embryophyta</taxon>
        <taxon>Tracheophyta</taxon>
        <taxon>Spermatophyta</taxon>
        <taxon>Magnoliopsida</taxon>
        <taxon>eudicotyledons</taxon>
        <taxon>Gunneridae</taxon>
        <taxon>Pentapetalae</taxon>
        <taxon>Caryophyllales</taxon>
        <taxon>Aizoaceae</taxon>
        <taxon>Mesembryanthemum</taxon>
        <taxon>Mesembryanthemum subgen. Cryophytum</taxon>
    </lineage>
</organism>
<reference key="1">
    <citation type="submission" date="1998-06" db="EMBL/GenBank/DDBJ databases">
        <title>Nucleoside diphosphate kinase I from the common ice plant.</title>
        <authorList>
            <person name="Michalowski C.B."/>
            <person name="Bohnert H.J."/>
        </authorList>
    </citation>
    <scope>NUCLEOTIDE SEQUENCE [MRNA]</scope>
    <source>
        <tissue>Root</tissue>
    </source>
</reference>
<evidence type="ECO:0000250" key="1"/>
<evidence type="ECO:0000305" key="2"/>
<dbReference type="EC" id="2.7.4.6"/>
<dbReference type="EMBL" id="AF072289">
    <property type="protein sequence ID" value="AAC25999.1"/>
    <property type="molecule type" value="mRNA"/>
</dbReference>
<dbReference type="SMR" id="O81372"/>
<dbReference type="GO" id="GO:0005524">
    <property type="term" value="F:ATP binding"/>
    <property type="evidence" value="ECO:0007669"/>
    <property type="project" value="UniProtKB-KW"/>
</dbReference>
<dbReference type="GO" id="GO:0046872">
    <property type="term" value="F:metal ion binding"/>
    <property type="evidence" value="ECO:0007669"/>
    <property type="project" value="UniProtKB-KW"/>
</dbReference>
<dbReference type="GO" id="GO:0004550">
    <property type="term" value="F:nucleoside diphosphate kinase activity"/>
    <property type="evidence" value="ECO:0007669"/>
    <property type="project" value="UniProtKB-EC"/>
</dbReference>
<dbReference type="GO" id="GO:0006241">
    <property type="term" value="P:CTP biosynthetic process"/>
    <property type="evidence" value="ECO:0007669"/>
    <property type="project" value="InterPro"/>
</dbReference>
<dbReference type="GO" id="GO:0006183">
    <property type="term" value="P:GTP biosynthetic process"/>
    <property type="evidence" value="ECO:0007669"/>
    <property type="project" value="InterPro"/>
</dbReference>
<dbReference type="GO" id="GO:0006228">
    <property type="term" value="P:UTP biosynthetic process"/>
    <property type="evidence" value="ECO:0007669"/>
    <property type="project" value="InterPro"/>
</dbReference>
<dbReference type="CDD" id="cd04413">
    <property type="entry name" value="NDPk_I"/>
    <property type="match status" value="1"/>
</dbReference>
<dbReference type="FunFam" id="3.30.70.141:FF:000002">
    <property type="entry name" value="Nucleoside diphosphate kinase"/>
    <property type="match status" value="1"/>
</dbReference>
<dbReference type="Gene3D" id="3.30.70.141">
    <property type="entry name" value="Nucleoside diphosphate kinase-like domain"/>
    <property type="match status" value="1"/>
</dbReference>
<dbReference type="HAMAP" id="MF_00451">
    <property type="entry name" value="NDP_kinase"/>
    <property type="match status" value="1"/>
</dbReference>
<dbReference type="InterPro" id="IPR034907">
    <property type="entry name" value="NDK-like_dom"/>
</dbReference>
<dbReference type="InterPro" id="IPR036850">
    <property type="entry name" value="NDK-like_dom_sf"/>
</dbReference>
<dbReference type="InterPro" id="IPR001564">
    <property type="entry name" value="Nucleoside_diP_kinase"/>
</dbReference>
<dbReference type="InterPro" id="IPR023005">
    <property type="entry name" value="Nucleoside_diP_kinase_AS"/>
</dbReference>
<dbReference type="NCBIfam" id="NF001908">
    <property type="entry name" value="PRK00668.1"/>
    <property type="match status" value="1"/>
</dbReference>
<dbReference type="PANTHER" id="PTHR11349">
    <property type="entry name" value="NUCLEOSIDE DIPHOSPHATE KINASE"/>
    <property type="match status" value="1"/>
</dbReference>
<dbReference type="Pfam" id="PF00334">
    <property type="entry name" value="NDK"/>
    <property type="match status" value="1"/>
</dbReference>
<dbReference type="PRINTS" id="PR01243">
    <property type="entry name" value="NUCDPKINASE"/>
</dbReference>
<dbReference type="SMART" id="SM00562">
    <property type="entry name" value="NDK"/>
    <property type="match status" value="1"/>
</dbReference>
<dbReference type="SUPFAM" id="SSF54919">
    <property type="entry name" value="Nucleoside diphosphate kinase, NDK"/>
    <property type="match status" value="1"/>
</dbReference>
<dbReference type="PROSITE" id="PS00469">
    <property type="entry name" value="NDPK"/>
    <property type="match status" value="1"/>
</dbReference>
<dbReference type="PROSITE" id="PS51374">
    <property type="entry name" value="NDPK_LIKE"/>
    <property type="match status" value="1"/>
</dbReference>
<accession>O81372</accession>
<proteinExistence type="evidence at transcript level"/>
<name>NDK1_MESCR</name>
<feature type="chain" id="PRO_0000137140" description="Nucleoside diphosphate kinase 1">
    <location>
        <begin position="1"/>
        <end position="148"/>
    </location>
</feature>
<feature type="active site" description="Pros-phosphohistidine intermediate" evidence="1">
    <location>
        <position position="115"/>
    </location>
</feature>
<feature type="binding site" evidence="1">
    <location>
        <position position="9"/>
    </location>
    <ligand>
        <name>ATP</name>
        <dbReference type="ChEBI" id="CHEBI:30616"/>
    </ligand>
</feature>
<feature type="binding site" evidence="1">
    <location>
        <position position="57"/>
    </location>
    <ligand>
        <name>ATP</name>
        <dbReference type="ChEBI" id="CHEBI:30616"/>
    </ligand>
</feature>
<feature type="binding site" evidence="1">
    <location>
        <position position="85"/>
    </location>
    <ligand>
        <name>ATP</name>
        <dbReference type="ChEBI" id="CHEBI:30616"/>
    </ligand>
</feature>
<feature type="binding site" evidence="1">
    <location>
        <position position="91"/>
    </location>
    <ligand>
        <name>ATP</name>
        <dbReference type="ChEBI" id="CHEBI:30616"/>
    </ligand>
</feature>
<feature type="binding site" evidence="1">
    <location>
        <position position="102"/>
    </location>
    <ligand>
        <name>ATP</name>
        <dbReference type="ChEBI" id="CHEBI:30616"/>
    </ligand>
</feature>
<feature type="binding site" evidence="1">
    <location>
        <position position="112"/>
    </location>
    <ligand>
        <name>ATP</name>
        <dbReference type="ChEBI" id="CHEBI:30616"/>
    </ligand>
</feature>
<protein>
    <recommendedName>
        <fullName>Nucleoside diphosphate kinase 1</fullName>
        <ecNumber>2.7.4.6</ecNumber>
    </recommendedName>
    <alternativeName>
        <fullName>Nucleoside diphosphate kinase I</fullName>
        <shortName>NDK I</shortName>
        <shortName>NDP kinase I</shortName>
        <shortName>NDPK I</shortName>
    </alternativeName>
</protein>